<proteinExistence type="evidence at protein level"/>
<accession>A0A0R8YWJ7</accession>
<reference key="1">
    <citation type="journal article" date="2016" name="Fungal Biol.">
        <title>Putative identification of the usnic acid biosynthetic gene cluster by de novo whole-genome sequencing of a lichen-forming fungus.</title>
        <authorList>
            <person name="Abdel-Hameed M.D."/>
            <person name="Bertrand R.L."/>
            <person name="Piercey-Normore M.D."/>
            <person name="Sorensen J.L."/>
        </authorList>
    </citation>
    <scope>NUCLEOTIDE SEQUENCE [GENOMIC DNA]</scope>
    <scope>FUNCTION</scope>
    <scope>INDUCTION</scope>
</reference>
<reference key="2">
    <citation type="submission" date="2016-02" db="EMBL/GenBank/DDBJ databases">
        <authorList>
            <person name="Wen L."/>
            <person name="He K."/>
            <person name="Yang H."/>
        </authorList>
    </citation>
    <scope>NUCLEOTIDE SEQUENCE [GENOMIC DNA]</scope>
</reference>
<reference key="3">
    <citation type="journal article" date="2015" name="Nat. Prod. Res.">
        <title>Review of the biological properties and toxicity of usnic acid.</title>
        <authorList>
            <person name="Araujo A.A."/>
            <person name="de Melo M.G."/>
            <person name="Rabelo T.K."/>
            <person name="Nunes P.S."/>
            <person name="Santos S.L."/>
            <person name="Serafini M.R."/>
            <person name="Santos M.R."/>
            <person name="Quintans-Junior L.J."/>
            <person name="Gelain D.P."/>
        </authorList>
    </citation>
    <scope>REVIEW ON BIOTECHNOLOGY</scope>
</reference>
<dbReference type="EC" id="2.3.1.-" evidence="12"/>
<dbReference type="EMBL" id="KT363732">
    <property type="protein sequence ID" value="ALA62323.2"/>
    <property type="molecule type" value="Genomic_DNA"/>
</dbReference>
<dbReference type="SMR" id="A0A0R8YWJ7"/>
<dbReference type="ESTHER" id="clauc-mpas">
    <property type="family name" value="BD-FAE"/>
</dbReference>
<dbReference type="GO" id="GO:0004315">
    <property type="term" value="F:3-oxoacyl-[acyl-carrier-protein] synthase activity"/>
    <property type="evidence" value="ECO:0007669"/>
    <property type="project" value="InterPro"/>
</dbReference>
<dbReference type="GO" id="GO:0004312">
    <property type="term" value="F:fatty acid synthase activity"/>
    <property type="evidence" value="ECO:0007669"/>
    <property type="project" value="TreeGrafter"/>
</dbReference>
<dbReference type="GO" id="GO:0016787">
    <property type="term" value="F:hydrolase activity"/>
    <property type="evidence" value="ECO:0007669"/>
    <property type="project" value="InterPro"/>
</dbReference>
<dbReference type="GO" id="GO:0008168">
    <property type="term" value="F:methyltransferase activity"/>
    <property type="evidence" value="ECO:0007669"/>
    <property type="project" value="UniProtKB-KW"/>
</dbReference>
<dbReference type="GO" id="GO:0031177">
    <property type="term" value="F:phosphopantetheine binding"/>
    <property type="evidence" value="ECO:0007669"/>
    <property type="project" value="InterPro"/>
</dbReference>
<dbReference type="GO" id="GO:0006633">
    <property type="term" value="P:fatty acid biosynthetic process"/>
    <property type="evidence" value="ECO:0007669"/>
    <property type="project" value="InterPro"/>
</dbReference>
<dbReference type="GO" id="GO:0032259">
    <property type="term" value="P:methylation"/>
    <property type="evidence" value="ECO:0007669"/>
    <property type="project" value="UniProtKB-KW"/>
</dbReference>
<dbReference type="GO" id="GO:0044550">
    <property type="term" value="P:secondary metabolite biosynthetic process"/>
    <property type="evidence" value="ECO:0007669"/>
    <property type="project" value="TreeGrafter"/>
</dbReference>
<dbReference type="CDD" id="cd02440">
    <property type="entry name" value="AdoMet_MTases"/>
    <property type="match status" value="1"/>
</dbReference>
<dbReference type="CDD" id="cd00833">
    <property type="entry name" value="PKS"/>
    <property type="match status" value="1"/>
</dbReference>
<dbReference type="Gene3D" id="3.30.70.3290">
    <property type="match status" value="1"/>
</dbReference>
<dbReference type="Gene3D" id="3.40.47.10">
    <property type="match status" value="1"/>
</dbReference>
<dbReference type="Gene3D" id="1.10.1200.10">
    <property type="entry name" value="ACP-like"/>
    <property type="match status" value="1"/>
</dbReference>
<dbReference type="Gene3D" id="3.40.50.1820">
    <property type="entry name" value="alpha/beta hydrolase"/>
    <property type="match status" value="1"/>
</dbReference>
<dbReference type="Gene3D" id="3.40.366.10">
    <property type="entry name" value="Malonyl-Coenzyme A Acyl Carrier Protein, domain 2"/>
    <property type="match status" value="2"/>
</dbReference>
<dbReference type="Gene3D" id="3.10.129.110">
    <property type="entry name" value="Polyketide synthase dehydratase"/>
    <property type="match status" value="1"/>
</dbReference>
<dbReference type="Gene3D" id="3.40.50.150">
    <property type="entry name" value="Vaccinia Virus protein VP39"/>
    <property type="match status" value="1"/>
</dbReference>
<dbReference type="InterPro" id="IPR013094">
    <property type="entry name" value="AB_hydrolase_3"/>
</dbReference>
<dbReference type="InterPro" id="IPR029058">
    <property type="entry name" value="AB_hydrolase_fold"/>
</dbReference>
<dbReference type="InterPro" id="IPR001227">
    <property type="entry name" value="Ac_transferase_dom_sf"/>
</dbReference>
<dbReference type="InterPro" id="IPR036736">
    <property type="entry name" value="ACP-like_sf"/>
</dbReference>
<dbReference type="InterPro" id="IPR014043">
    <property type="entry name" value="Acyl_transferase_dom"/>
</dbReference>
<dbReference type="InterPro" id="IPR016035">
    <property type="entry name" value="Acyl_Trfase/lysoPLipase"/>
</dbReference>
<dbReference type="InterPro" id="IPR018201">
    <property type="entry name" value="Ketoacyl_synth_AS"/>
</dbReference>
<dbReference type="InterPro" id="IPR014031">
    <property type="entry name" value="Ketoacyl_synth_C"/>
</dbReference>
<dbReference type="InterPro" id="IPR014030">
    <property type="entry name" value="Ketoacyl_synth_N"/>
</dbReference>
<dbReference type="InterPro" id="IPR013217">
    <property type="entry name" value="Methyltransf_12"/>
</dbReference>
<dbReference type="InterPro" id="IPR020841">
    <property type="entry name" value="PKS_Beta-ketoAc_synthase_dom"/>
</dbReference>
<dbReference type="InterPro" id="IPR042104">
    <property type="entry name" value="PKS_dehydratase_sf"/>
</dbReference>
<dbReference type="InterPro" id="IPR049900">
    <property type="entry name" value="PKS_mFAS_DH"/>
</dbReference>
<dbReference type="InterPro" id="IPR050091">
    <property type="entry name" value="PKS_NRPS_Biosynth_Enz"/>
</dbReference>
<dbReference type="InterPro" id="IPR020806">
    <property type="entry name" value="PKS_PP-bd"/>
</dbReference>
<dbReference type="InterPro" id="IPR009081">
    <property type="entry name" value="PP-bd_ACP"/>
</dbReference>
<dbReference type="InterPro" id="IPR029063">
    <property type="entry name" value="SAM-dependent_MTases_sf"/>
</dbReference>
<dbReference type="InterPro" id="IPR032088">
    <property type="entry name" value="SAT"/>
</dbReference>
<dbReference type="InterPro" id="IPR016039">
    <property type="entry name" value="Thiolase-like"/>
</dbReference>
<dbReference type="PANTHER" id="PTHR43775">
    <property type="entry name" value="FATTY ACID SYNTHASE"/>
    <property type="match status" value="1"/>
</dbReference>
<dbReference type="PANTHER" id="PTHR43775:SF21">
    <property type="entry name" value="NON-REDUCING POLYKETIDE SYNTHASE AUSA-RELATED"/>
    <property type="match status" value="1"/>
</dbReference>
<dbReference type="Pfam" id="PF07859">
    <property type="entry name" value="Abhydrolase_3"/>
    <property type="match status" value="1"/>
</dbReference>
<dbReference type="Pfam" id="PF00698">
    <property type="entry name" value="Acyl_transf_1"/>
    <property type="match status" value="1"/>
</dbReference>
<dbReference type="Pfam" id="PF18558">
    <property type="entry name" value="HTH_51"/>
    <property type="match status" value="1"/>
</dbReference>
<dbReference type="Pfam" id="PF00109">
    <property type="entry name" value="ketoacyl-synt"/>
    <property type="match status" value="1"/>
</dbReference>
<dbReference type="Pfam" id="PF02801">
    <property type="entry name" value="Ketoacyl-synt_C"/>
    <property type="match status" value="1"/>
</dbReference>
<dbReference type="Pfam" id="PF08242">
    <property type="entry name" value="Methyltransf_12"/>
    <property type="match status" value="1"/>
</dbReference>
<dbReference type="Pfam" id="PF00550">
    <property type="entry name" value="PP-binding"/>
    <property type="match status" value="1"/>
</dbReference>
<dbReference type="Pfam" id="PF16073">
    <property type="entry name" value="SAT"/>
    <property type="match status" value="1"/>
</dbReference>
<dbReference type="SMART" id="SM00827">
    <property type="entry name" value="PKS_AT"/>
    <property type="match status" value="1"/>
</dbReference>
<dbReference type="SMART" id="SM00825">
    <property type="entry name" value="PKS_KS"/>
    <property type="match status" value="1"/>
</dbReference>
<dbReference type="SMART" id="SM00823">
    <property type="entry name" value="PKS_PP"/>
    <property type="match status" value="1"/>
</dbReference>
<dbReference type="SUPFAM" id="SSF47336">
    <property type="entry name" value="ACP-like"/>
    <property type="match status" value="1"/>
</dbReference>
<dbReference type="SUPFAM" id="SSF53474">
    <property type="entry name" value="alpha/beta-Hydrolases"/>
    <property type="match status" value="1"/>
</dbReference>
<dbReference type="SUPFAM" id="SSF52151">
    <property type="entry name" value="FabD/lysophospholipase-like"/>
    <property type="match status" value="1"/>
</dbReference>
<dbReference type="SUPFAM" id="SSF53335">
    <property type="entry name" value="S-adenosyl-L-methionine-dependent methyltransferases"/>
    <property type="match status" value="1"/>
</dbReference>
<dbReference type="SUPFAM" id="SSF53901">
    <property type="entry name" value="Thiolase-like"/>
    <property type="match status" value="1"/>
</dbReference>
<dbReference type="PROSITE" id="PS50075">
    <property type="entry name" value="CARRIER"/>
    <property type="match status" value="1"/>
</dbReference>
<dbReference type="PROSITE" id="PS00606">
    <property type="entry name" value="KS3_1"/>
    <property type="match status" value="1"/>
</dbReference>
<dbReference type="PROSITE" id="PS52004">
    <property type="entry name" value="KS3_2"/>
    <property type="match status" value="1"/>
</dbReference>
<dbReference type="PROSITE" id="PS52019">
    <property type="entry name" value="PKS_MFAS_DH"/>
    <property type="match status" value="1"/>
</dbReference>
<keyword id="KW-0012">Acyltransferase</keyword>
<keyword id="KW-0489">Methyltransferase</keyword>
<keyword id="KW-0511">Multifunctional enzyme</keyword>
<keyword id="KW-0596">Phosphopantetheine</keyword>
<keyword id="KW-0597">Phosphoprotein</keyword>
<keyword id="KW-0808">Transferase</keyword>
<sequence length="2545" mass="278261">MALPSLIAFGALAPWPASDRLDQLRNALQHHNSLKPITKAIQELPLLWKALSNQDQSLHSIAGEAAADQLAQWISGAGTAQLVDDKGNVTRMPLTTIAQIAQYVSYLCQYEEPLRHESIIKSAAIGGGIQGFCIGLLSALAVASGKTEDDVGNFAAMSVRLAFCVGAYVDLDRHRNGGDSKASTIAVRWKTPTTLEDIQRLLSRHPDTYIAVVRDIRDVTITVPASVMEHLIEDLSQIGASLRDTGVSGRYHVAIHEGIPQKILETCQAQFSPTINGQPLVRSNTDAHLFSGEDTALLALECILGERADWYSTISTAASALNQISANPFILSIGTDPVPQSVARSFPVVKATMIADRVNGIVEPEIPALAPDPFGSVSQGYPKDAIAIIGMGCRFPGADSIDEYWNLLTEGKSMLSEIPEARFGRGRPARSNSSLRFWGNFLRDIEAFDHGFFKKSPREAVSMDPQQRVLLQVAYEALESSGYFADSSRPEDVGCYIGACATDYDFNVASHPPSAYSAIGTLRSFLSGKLSHYFGWSGPSLVLDTACSSSAVAIHTACTALRTGQCSQALAGGITLMTSPYLYENFAAAHFLSPTGSSKPFSADADGYCRGEGGGLVVLKRLSDALRDNDHILGVIAGSAVNQNDNCVPITVPHTSSQGNLYERVTEQAGVRPSEVTFVEAHGTGTPVGDPIEMESIRRVFGGLHRVAPLIVSSAKGNIGHLEGASGVAALIKALLQMEHHLAPRQASFKTLNPKIPALEPDNLCIPTSNLALSGERLAACINNYGAAGSNAAMIVLEPPRKSVTYHDKSKMSISSRPKIHPIQLAAASLGGLLAYCVALDQYCQRLRFTQDTSEQPQVLSDLAYSLSTRLNQELPFTLTMTVTDLDQLQAQLRQQTVTSNNIKQRSKAPPVVLCFGGQVSDRVALDKCLWQESTLLRSYLDICDNTLRVLGYPGLYPSIFQNEAVTDVVLLHSMIFALQYSCAQAWLESGLKVDALVGHSFGQLTALCVSGILSLRDGLRLVAGRASLMQKHWGPESGKMIAIETDQQTLEELQKVICESNASYNFEIACFNGPTSHVVVSDRCSASELETKLMERAIRHRSLDVPYGFHSRFTEPLLPHLEDLASSLTFHEPKIPLETCTDMGTWTEPTSKLIAAHTREPVFFGKAIQRLQARLGPCTWLEAGSDSSIVNMVRRALGQASATANNFVSLQLNKPNSSKLVVDATVALWDASHRAQFWNFHRLQRRQYDHLRLPPYAWEKSKHWLELDMSAALNSDKTNTPPPTNTAAQVELPAVLIRLKSFDSQGHHFVINPSSEEYQTIVKDLESLGSAVCPSTLYVELASRAVRVAEEDKGNGLLSIKDLRVHSLLGVNVHQTISLDLQRLAQSWRFRITNADGSISGSNPGESFCHAEGTVNLKVADDSLEEEFCRYERLTGHNKIISIADDPRSESLRGNVLYNMLGRVVNYPDWYRGVKSVAALDLRVVAKVTCPVGIPEIVSKESTTQLPILESFIQIASLHANCLHECRGGEVFQFTRADHMQWAPGFDLHGYGDSAEASWDVLAYNSTNAENVVYDIFVHDAVTGRLVLLVLGANFTDIRRPVPISAGLNTSLASEKDIPMLKNANAERAEISLNSQLPAESHSQANLTRPGKDAKTSIYEDICGLLEKLADIPGDQVSGEATFDNLGVDSLMMIEVISELSTLFRVDLPIHELEELTDINSLVDYLHGKGCVGSLYVEDSGNASSLSSSHAISTGASSPPDSSGASAMTTPPETLSLVDYPGSLTTKQESRAAPAISNGTGRQPLDMGPYGIQQVFTRLRFDFEKYAEQTGAKGFWTNVYPQQADLVCAYVVDAYRKLGCDLATLAAGQQLPSMNTLPRHKHLVAQLRNILVESGLLELRGNQVHVRTAKTVDSTPTAIRYEQMLQRHPFGASETKLLNVTGPRLADCLTGQKEPLSLLFGDKHNRDLLADFYANSQMLKAATRLLAEFVSSTFSAAQSGDTLCILEVGAGTGGTTRYLVDVLNRCGIPYEYTFTDISQSLVTQAKRNFASLPQMRFMTFDCDRPAPQELLGKFHIVISTNCIHATSNITTSTTNILPTLRDDGVLCLVEFTRNLYWFDLVFGLLEGWWLFSDGRQHALANEWFWDRSLRAAGFKHVSWTDGNTEEAKTLRLICAFRGEAKEDRNLAAPNGAITKRAGVPMEEVVWKRVGTLDLSADIYFPKTPDPPGKKRPIALLIHGGGHFLFGRKDVPMKHIRTLIERGFLPISTDYRLCPETNLFEGPMTDCCDALKWATETLPTLPLSGPTVRPDPTKVVSLGWSSGGQLAMSLGYTAPVKGIKAPDAIFALYPPSDMESNHWHQPCYPLAAEEEPTEILDILAGVRESPIVEYAPVSEKRTMALSLTLKDDRASIILHMCWKSQTVPILVHGLPYKKNLPDTDKTDWKYRPPASAEQVQAISPLWQIRQGNYKTPTFIVHGNGDDWLPLSMSERTVEELKRRGIPASLAVPEQCGHAFDLFPVGDPLGVGWTSLEQGYDFICRQLGMS</sequence>
<feature type="chain" id="PRO_0000437583" description="Methylphloroacetophenone synthase">
    <location>
        <begin position="1"/>
        <end position="2545"/>
    </location>
</feature>
<feature type="domain" description="Ketosynthase family 3 (KS3)" evidence="4">
    <location>
        <begin position="383"/>
        <end position="798"/>
    </location>
</feature>
<feature type="domain" description="PKS/mFAS DH" evidence="5">
    <location>
        <begin position="1293"/>
        <end position="1605"/>
    </location>
</feature>
<feature type="domain" description="Carrier" evidence="3">
    <location>
        <begin position="1657"/>
        <end position="1731"/>
    </location>
</feature>
<feature type="region of interest" description="N-terminal acylcarrier protein transacylase (SAT) domain" evidence="2">
    <location>
        <begin position="8"/>
        <end position="261"/>
    </location>
</feature>
<feature type="region of interest" description="Malonyl-CoA:ACP transacylase (MAT) domain" evidence="2">
    <location>
        <begin position="914"/>
        <end position="1218"/>
    </location>
</feature>
<feature type="region of interest" description="N-terminal hotdog fold" evidence="5">
    <location>
        <begin position="1293"/>
        <end position="1423"/>
    </location>
</feature>
<feature type="region of interest" description="Product template (PT) domain" evidence="2">
    <location>
        <begin position="1296"/>
        <end position="1604"/>
    </location>
</feature>
<feature type="region of interest" description="C-terminal hotdog fold" evidence="5">
    <location>
        <begin position="1449"/>
        <end position="1605"/>
    </location>
</feature>
<feature type="region of interest" description="Disordered" evidence="7">
    <location>
        <begin position="1748"/>
        <end position="1773"/>
    </location>
</feature>
<feature type="region of interest" description="Methyltransferase (CMeT) domain" evidence="2">
    <location>
        <begin position="1931"/>
        <end position="2163"/>
    </location>
</feature>
<feature type="region of interest" description="Claisen cyclase (CLC) domain" evidence="13">
    <location>
        <begin position="2198"/>
        <end position="2544"/>
    </location>
</feature>
<feature type="compositionally biased region" description="Low complexity" evidence="7">
    <location>
        <begin position="1748"/>
        <end position="1768"/>
    </location>
</feature>
<feature type="active site" description="For beta-ketoacyl synthase activity" evidence="4">
    <location>
        <position position="547"/>
    </location>
</feature>
<feature type="active site" description="For beta-ketoacyl synthase activity" evidence="4">
    <location>
        <position position="682"/>
    </location>
</feature>
<feature type="active site" description="For beta-ketoacyl synthase activity" evidence="4">
    <location>
        <position position="721"/>
    </location>
</feature>
<feature type="active site" description="For acyl/malonyl transferase activity" evidence="6">
    <location>
        <position position="1001"/>
    </location>
</feature>
<feature type="active site" description="For thioesterase activity" evidence="1">
    <location>
        <position position="2321"/>
    </location>
</feature>
<feature type="active site" description="For thioesterase activity" evidence="1">
    <location>
        <position position="2481"/>
    </location>
</feature>
<feature type="active site" description="For thioesterase activity" evidence="1">
    <location>
        <position position="2513"/>
    </location>
</feature>
<feature type="modified residue" description="O-(pantetheine 4'-phosphoryl)serine" evidence="3">
    <location>
        <position position="1691"/>
    </location>
</feature>
<name>MPAS_CLAUC</name>
<comment type="function">
    <text evidence="9">Methylphloroacetophenone synthase; part of the gene cluster that mediates the biosynthesis of usnic acid, a dibenzofuran lichen product possessing a broad spectrum of biological activities (PubMed:26895859). Two genes, mpas and mpao, comprise the usnic acid biosynthetic gene cluster with a single post-PKS enzyme, the methylphloracetophenone oxidase (mpao) (PubMed:26895859). The methylphloroacetophenone synthase (mpas) is a non-reducing polyketide synthase that produces methylphloracetophenone from acetate via a methylated tetraketide intermediate (PubMed:26895859). The methylphloroacetophenone oxidase then carries out the oxidative dimerization of methylphloracetophenone to usnic acid (PubMed:26895859).</text>
</comment>
<comment type="induction">
    <text evidence="9">Expression is lower in the cultured mycobiont when compared to the wild-type lichen (PubMed:26895859).</text>
</comment>
<comment type="domain">
    <text evidence="9">The formation of methylphloracetophenone leading to dibenzufurans such as usnic acid requires a 1,6-Claisen-style condensation performed by a terminal CLC domain that simultaneously aromatizes the tetraketide and releases it from the PKS (PubMed:26895859).</text>
</comment>
<comment type="biotechnology">
    <text evidence="8">Lichens belonging to usnic acid-containing genera have been used as crude drugs throughout the world (PubMed:25707417). Usnic acid is a potentially interesting candidate for such activities as anti-inflammatory, analgesic, healing, antioxidant, antimicrobial, antiprotozoal, antiviral, larvicidal and UV protection (PubMed:25707417). However, it was shown to be toxic for the liver and to lead to contact allergy (PubMed:25707417).</text>
</comment>
<evidence type="ECO:0000250" key="1">
    <source>
        <dbReference type="UniProtKB" id="Q5ATJ7"/>
    </source>
</evidence>
<evidence type="ECO:0000255" key="2"/>
<evidence type="ECO:0000255" key="3">
    <source>
        <dbReference type="PROSITE-ProRule" id="PRU00258"/>
    </source>
</evidence>
<evidence type="ECO:0000255" key="4">
    <source>
        <dbReference type="PROSITE-ProRule" id="PRU01348"/>
    </source>
</evidence>
<evidence type="ECO:0000255" key="5">
    <source>
        <dbReference type="PROSITE-ProRule" id="PRU01363"/>
    </source>
</evidence>
<evidence type="ECO:0000255" key="6">
    <source>
        <dbReference type="PROSITE-ProRule" id="PRU10022"/>
    </source>
</evidence>
<evidence type="ECO:0000256" key="7">
    <source>
        <dbReference type="SAM" id="MobiDB-lite"/>
    </source>
</evidence>
<evidence type="ECO:0000269" key="8">
    <source>
    </source>
</evidence>
<evidence type="ECO:0000269" key="9">
    <source>
    </source>
</evidence>
<evidence type="ECO:0000303" key="10">
    <source>
    </source>
</evidence>
<evidence type="ECO:0000303" key="11">
    <source ref="2"/>
</evidence>
<evidence type="ECO:0000305" key="12"/>
<evidence type="ECO:0000305" key="13">
    <source>
    </source>
</evidence>
<organism>
    <name type="scientific">Cladonia uncialis</name>
    <name type="common">Cup lichen</name>
    <dbReference type="NCBI Taxonomy" id="174080"/>
    <lineage>
        <taxon>Eukaryota</taxon>
        <taxon>Fungi</taxon>
        <taxon>Dikarya</taxon>
        <taxon>Ascomycota</taxon>
        <taxon>Pezizomycotina</taxon>
        <taxon>Lecanoromycetes</taxon>
        <taxon>OSLEUM clade</taxon>
        <taxon>Lecanoromycetidae</taxon>
        <taxon>Lecanorales</taxon>
        <taxon>Lecanorineae</taxon>
        <taxon>Cladoniaceae</taxon>
        <taxon>Cladonia</taxon>
    </lineage>
</organism>
<gene>
    <name evidence="11" type="primary">mpas</name>
</gene>
<protein>
    <recommendedName>
        <fullName evidence="10">Methylphloroacetophenone synthase</fullName>
        <shortName evidence="10">MPAS</shortName>
        <ecNumber evidence="12">2.3.1.-</ecNumber>
    </recommendedName>
    <alternativeName>
        <fullName evidence="10">Non-reducing polyketide synthase MPAS</fullName>
    </alternativeName>
    <alternativeName>
        <fullName evidence="12">Usnic acid biosynthesis protein MPAS</fullName>
    </alternativeName>
</protein>